<keyword id="KW-0030">Aminoacyl-tRNA synthetase</keyword>
<keyword id="KW-0067">ATP-binding</keyword>
<keyword id="KW-0963">Cytoplasm</keyword>
<keyword id="KW-0436">Ligase</keyword>
<keyword id="KW-0547">Nucleotide-binding</keyword>
<keyword id="KW-0648">Protein biosynthesis</keyword>
<keyword id="KW-1185">Reference proteome</keyword>
<accession>P0A8L4</accession>
<accession>P09156</accession>
<feature type="chain" id="PRO_0000122116" description="Serine--tRNA ligase">
    <location>
        <begin position="1"/>
        <end position="430"/>
    </location>
</feature>
<feature type="binding site" evidence="1">
    <location>
        <begin position="237"/>
        <end position="239"/>
    </location>
    <ligand>
        <name>L-serine</name>
        <dbReference type="ChEBI" id="CHEBI:33384"/>
    </ligand>
</feature>
<feature type="binding site" evidence="1">
    <location>
        <begin position="268"/>
        <end position="270"/>
    </location>
    <ligand>
        <name>ATP</name>
        <dbReference type="ChEBI" id="CHEBI:30616"/>
    </ligand>
</feature>
<feature type="binding site" evidence="1">
    <location>
        <position position="291"/>
    </location>
    <ligand>
        <name>L-serine</name>
        <dbReference type="ChEBI" id="CHEBI:33384"/>
    </ligand>
</feature>
<feature type="binding site" evidence="1">
    <location>
        <begin position="355"/>
        <end position="358"/>
    </location>
    <ligand>
        <name>ATP</name>
        <dbReference type="ChEBI" id="CHEBI:30616"/>
    </ligand>
</feature>
<feature type="binding site" evidence="1">
    <location>
        <position position="391"/>
    </location>
    <ligand>
        <name>L-serine</name>
        <dbReference type="ChEBI" id="CHEBI:33384"/>
    </ligand>
</feature>
<gene>
    <name evidence="1" type="primary">serS</name>
    <name type="ordered locus">SF0852</name>
    <name type="ordered locus">S0893</name>
</gene>
<reference key="1">
    <citation type="journal article" date="2002" name="Nucleic Acids Res.">
        <title>Genome sequence of Shigella flexneri 2a: insights into pathogenicity through comparison with genomes of Escherichia coli K12 and O157.</title>
        <authorList>
            <person name="Jin Q."/>
            <person name="Yuan Z."/>
            <person name="Xu J."/>
            <person name="Wang Y."/>
            <person name="Shen Y."/>
            <person name="Lu W."/>
            <person name="Wang J."/>
            <person name="Liu H."/>
            <person name="Yang J."/>
            <person name="Yang F."/>
            <person name="Zhang X."/>
            <person name="Zhang J."/>
            <person name="Yang G."/>
            <person name="Wu H."/>
            <person name="Qu D."/>
            <person name="Dong J."/>
            <person name="Sun L."/>
            <person name="Xue Y."/>
            <person name="Zhao A."/>
            <person name="Gao Y."/>
            <person name="Zhu J."/>
            <person name="Kan B."/>
            <person name="Ding K."/>
            <person name="Chen S."/>
            <person name="Cheng H."/>
            <person name="Yao Z."/>
            <person name="He B."/>
            <person name="Chen R."/>
            <person name="Ma D."/>
            <person name="Qiang B."/>
            <person name="Wen Y."/>
            <person name="Hou Y."/>
            <person name="Yu J."/>
        </authorList>
    </citation>
    <scope>NUCLEOTIDE SEQUENCE [LARGE SCALE GENOMIC DNA]</scope>
    <source>
        <strain>301 / Serotype 2a</strain>
    </source>
</reference>
<reference key="2">
    <citation type="journal article" date="2003" name="Infect. Immun.">
        <title>Complete genome sequence and comparative genomics of Shigella flexneri serotype 2a strain 2457T.</title>
        <authorList>
            <person name="Wei J."/>
            <person name="Goldberg M.B."/>
            <person name="Burland V."/>
            <person name="Venkatesan M.M."/>
            <person name="Deng W."/>
            <person name="Fournier G."/>
            <person name="Mayhew G.F."/>
            <person name="Plunkett G. III"/>
            <person name="Rose D.J."/>
            <person name="Darling A."/>
            <person name="Mau B."/>
            <person name="Perna N.T."/>
            <person name="Payne S.M."/>
            <person name="Runyen-Janecky L.J."/>
            <person name="Zhou S."/>
            <person name="Schwartz D.C."/>
            <person name="Blattner F.R."/>
        </authorList>
    </citation>
    <scope>NUCLEOTIDE SEQUENCE [LARGE SCALE GENOMIC DNA]</scope>
    <source>
        <strain>ATCC 700930 / 2457T / Serotype 2a</strain>
    </source>
</reference>
<sequence length="430" mass="48414">MLDPNLLRNEPDAVAEKLARRGFKLDVDKLGALEERRKVLQVKTENLQAERNSRSKSIGQAKARGEDIEPLRLEVNKLGEELDAAKAELDALQAEIRDIALTIPNLPADEVPVGKDENDNVEVSRWGTPREFDFEVRDHVTLGEMHSGLDFAAAVKLTGSRFVVMKGQIARMHRALSQFMLDLHTEQHGYSENYVPYLVNQDTLYGTGQLPKFAGDLFHTRPLEEEADTSNYALIPTAEVPLTNLVRGEIIDEDDLPIKMTAHTPCFRSEAGSYGRDTRGLIRMHQFDKVEMVQIVRPEDSMAALEEMTGHAEKVLQLLGLPYRKIILCTGDMGFGACKTYDLEVWIPAQNTYREISSCSNVWDFQARRMQARCRSKSDKKTRLVHTLNGSGLAVGRTLVAVMENYQQADGRIEVPEVLRPYMNGLEYIG</sequence>
<evidence type="ECO:0000255" key="1">
    <source>
        <dbReference type="HAMAP-Rule" id="MF_00176"/>
    </source>
</evidence>
<dbReference type="EC" id="6.1.1.11" evidence="1"/>
<dbReference type="EMBL" id="AE005674">
    <property type="protein sequence ID" value="AAN42485.1"/>
    <property type="molecule type" value="Genomic_DNA"/>
</dbReference>
<dbReference type="EMBL" id="AE014073">
    <property type="protein sequence ID" value="AAP16357.1"/>
    <property type="molecule type" value="Genomic_DNA"/>
</dbReference>
<dbReference type="RefSeq" id="NP_706778.1">
    <property type="nucleotide sequence ID" value="NC_004337.2"/>
</dbReference>
<dbReference type="RefSeq" id="WP_000886683.1">
    <property type="nucleotide sequence ID" value="NZ_WPGW01000037.1"/>
</dbReference>
<dbReference type="SMR" id="P0A8L4"/>
<dbReference type="STRING" id="198214.SF0852"/>
<dbReference type="PaxDb" id="198214-SF0852"/>
<dbReference type="GeneID" id="1023819"/>
<dbReference type="GeneID" id="93776527"/>
<dbReference type="KEGG" id="sfl:SF0852"/>
<dbReference type="KEGG" id="sfx:S0893"/>
<dbReference type="PATRIC" id="fig|198214.7.peg.982"/>
<dbReference type="HOGENOM" id="CLU_023797_1_1_6"/>
<dbReference type="UniPathway" id="UPA00906">
    <property type="reaction ID" value="UER00895"/>
</dbReference>
<dbReference type="Proteomes" id="UP000001006">
    <property type="component" value="Chromosome"/>
</dbReference>
<dbReference type="Proteomes" id="UP000002673">
    <property type="component" value="Chromosome"/>
</dbReference>
<dbReference type="GO" id="GO:0005737">
    <property type="term" value="C:cytoplasm"/>
    <property type="evidence" value="ECO:0007669"/>
    <property type="project" value="UniProtKB-SubCell"/>
</dbReference>
<dbReference type="GO" id="GO:0005524">
    <property type="term" value="F:ATP binding"/>
    <property type="evidence" value="ECO:0007669"/>
    <property type="project" value="UniProtKB-UniRule"/>
</dbReference>
<dbReference type="GO" id="GO:0004828">
    <property type="term" value="F:serine-tRNA ligase activity"/>
    <property type="evidence" value="ECO:0007669"/>
    <property type="project" value="UniProtKB-UniRule"/>
</dbReference>
<dbReference type="GO" id="GO:0016260">
    <property type="term" value="P:selenocysteine biosynthetic process"/>
    <property type="evidence" value="ECO:0007669"/>
    <property type="project" value="UniProtKB-UniRule"/>
</dbReference>
<dbReference type="GO" id="GO:0006434">
    <property type="term" value="P:seryl-tRNA aminoacylation"/>
    <property type="evidence" value="ECO:0007669"/>
    <property type="project" value="UniProtKB-UniRule"/>
</dbReference>
<dbReference type="CDD" id="cd00770">
    <property type="entry name" value="SerRS_core"/>
    <property type="match status" value="1"/>
</dbReference>
<dbReference type="FunFam" id="1.10.287.40:FF:000001">
    <property type="entry name" value="Serine--tRNA ligase"/>
    <property type="match status" value="1"/>
</dbReference>
<dbReference type="FunFam" id="3.30.930.10:FF:000018">
    <property type="entry name" value="Serine--tRNA ligase"/>
    <property type="match status" value="1"/>
</dbReference>
<dbReference type="Gene3D" id="3.30.930.10">
    <property type="entry name" value="Bira Bifunctional Protein, Domain 2"/>
    <property type="match status" value="1"/>
</dbReference>
<dbReference type="Gene3D" id="1.10.287.40">
    <property type="entry name" value="Serine-tRNA synthetase, tRNA binding domain"/>
    <property type="match status" value="1"/>
</dbReference>
<dbReference type="HAMAP" id="MF_00176">
    <property type="entry name" value="Ser_tRNA_synth_type1"/>
    <property type="match status" value="1"/>
</dbReference>
<dbReference type="InterPro" id="IPR002314">
    <property type="entry name" value="aa-tRNA-synt_IIb"/>
</dbReference>
<dbReference type="InterPro" id="IPR006195">
    <property type="entry name" value="aa-tRNA-synth_II"/>
</dbReference>
<dbReference type="InterPro" id="IPR045864">
    <property type="entry name" value="aa-tRNA-synth_II/BPL/LPL"/>
</dbReference>
<dbReference type="InterPro" id="IPR002317">
    <property type="entry name" value="Ser-tRNA-ligase_type_1"/>
</dbReference>
<dbReference type="InterPro" id="IPR015866">
    <property type="entry name" value="Ser-tRNA-synth_1_N"/>
</dbReference>
<dbReference type="InterPro" id="IPR042103">
    <property type="entry name" value="SerRS_1_N_sf"/>
</dbReference>
<dbReference type="InterPro" id="IPR033729">
    <property type="entry name" value="SerRS_core"/>
</dbReference>
<dbReference type="InterPro" id="IPR010978">
    <property type="entry name" value="tRNA-bd_arm"/>
</dbReference>
<dbReference type="NCBIfam" id="TIGR00414">
    <property type="entry name" value="serS"/>
    <property type="match status" value="1"/>
</dbReference>
<dbReference type="PANTHER" id="PTHR43697:SF1">
    <property type="entry name" value="SERINE--TRNA LIGASE"/>
    <property type="match status" value="1"/>
</dbReference>
<dbReference type="PANTHER" id="PTHR43697">
    <property type="entry name" value="SERYL-TRNA SYNTHETASE"/>
    <property type="match status" value="1"/>
</dbReference>
<dbReference type="Pfam" id="PF02403">
    <property type="entry name" value="Seryl_tRNA_N"/>
    <property type="match status" value="1"/>
</dbReference>
<dbReference type="Pfam" id="PF00587">
    <property type="entry name" value="tRNA-synt_2b"/>
    <property type="match status" value="1"/>
</dbReference>
<dbReference type="PIRSF" id="PIRSF001529">
    <property type="entry name" value="Ser-tRNA-synth_IIa"/>
    <property type="match status" value="1"/>
</dbReference>
<dbReference type="PRINTS" id="PR00981">
    <property type="entry name" value="TRNASYNTHSER"/>
</dbReference>
<dbReference type="SUPFAM" id="SSF55681">
    <property type="entry name" value="Class II aaRS and biotin synthetases"/>
    <property type="match status" value="1"/>
</dbReference>
<dbReference type="SUPFAM" id="SSF46589">
    <property type="entry name" value="tRNA-binding arm"/>
    <property type="match status" value="1"/>
</dbReference>
<dbReference type="PROSITE" id="PS50862">
    <property type="entry name" value="AA_TRNA_LIGASE_II"/>
    <property type="match status" value="1"/>
</dbReference>
<proteinExistence type="inferred from homology"/>
<organism>
    <name type="scientific">Shigella flexneri</name>
    <dbReference type="NCBI Taxonomy" id="623"/>
    <lineage>
        <taxon>Bacteria</taxon>
        <taxon>Pseudomonadati</taxon>
        <taxon>Pseudomonadota</taxon>
        <taxon>Gammaproteobacteria</taxon>
        <taxon>Enterobacterales</taxon>
        <taxon>Enterobacteriaceae</taxon>
        <taxon>Shigella</taxon>
    </lineage>
</organism>
<name>SYS_SHIFL</name>
<protein>
    <recommendedName>
        <fullName evidence="1">Serine--tRNA ligase</fullName>
        <ecNumber evidence="1">6.1.1.11</ecNumber>
    </recommendedName>
    <alternativeName>
        <fullName evidence="1">Seryl-tRNA synthetase</fullName>
        <shortName evidence="1">SerRS</shortName>
    </alternativeName>
    <alternativeName>
        <fullName evidence="1">Seryl-tRNA(Ser/Sec) synthetase</fullName>
    </alternativeName>
</protein>
<comment type="function">
    <text evidence="1">Catalyzes the attachment of serine to tRNA(Ser). Is also able to aminoacylate tRNA(Sec) with serine, to form the misacylated tRNA L-seryl-tRNA(Sec), which will be further converted into selenocysteinyl-tRNA(Sec).</text>
</comment>
<comment type="catalytic activity">
    <reaction evidence="1">
        <text>tRNA(Ser) + L-serine + ATP = L-seryl-tRNA(Ser) + AMP + diphosphate + H(+)</text>
        <dbReference type="Rhea" id="RHEA:12292"/>
        <dbReference type="Rhea" id="RHEA-COMP:9669"/>
        <dbReference type="Rhea" id="RHEA-COMP:9703"/>
        <dbReference type="ChEBI" id="CHEBI:15378"/>
        <dbReference type="ChEBI" id="CHEBI:30616"/>
        <dbReference type="ChEBI" id="CHEBI:33019"/>
        <dbReference type="ChEBI" id="CHEBI:33384"/>
        <dbReference type="ChEBI" id="CHEBI:78442"/>
        <dbReference type="ChEBI" id="CHEBI:78533"/>
        <dbReference type="ChEBI" id="CHEBI:456215"/>
        <dbReference type="EC" id="6.1.1.11"/>
    </reaction>
</comment>
<comment type="catalytic activity">
    <reaction evidence="1">
        <text>tRNA(Sec) + L-serine + ATP = L-seryl-tRNA(Sec) + AMP + diphosphate + H(+)</text>
        <dbReference type="Rhea" id="RHEA:42580"/>
        <dbReference type="Rhea" id="RHEA-COMP:9742"/>
        <dbReference type="Rhea" id="RHEA-COMP:10128"/>
        <dbReference type="ChEBI" id="CHEBI:15378"/>
        <dbReference type="ChEBI" id="CHEBI:30616"/>
        <dbReference type="ChEBI" id="CHEBI:33019"/>
        <dbReference type="ChEBI" id="CHEBI:33384"/>
        <dbReference type="ChEBI" id="CHEBI:78442"/>
        <dbReference type="ChEBI" id="CHEBI:78533"/>
        <dbReference type="ChEBI" id="CHEBI:456215"/>
        <dbReference type="EC" id="6.1.1.11"/>
    </reaction>
</comment>
<comment type="pathway">
    <text evidence="1">Aminoacyl-tRNA biosynthesis; selenocysteinyl-tRNA(Sec) biosynthesis; L-seryl-tRNA(Sec) from L-serine and tRNA(Sec): step 1/1.</text>
</comment>
<comment type="subunit">
    <text evidence="1">Homodimer. The tRNA molecule binds across the dimer.</text>
</comment>
<comment type="subcellular location">
    <subcellularLocation>
        <location evidence="1">Cytoplasm</location>
    </subcellularLocation>
</comment>
<comment type="domain">
    <text evidence="1">Consists of two distinct domains, a catalytic core and a N-terminal extension that is involved in tRNA binding.</text>
</comment>
<comment type="similarity">
    <text evidence="1">Belongs to the class-II aminoacyl-tRNA synthetase family. Type-1 seryl-tRNA synthetase subfamily.</text>
</comment>